<keyword id="KW-1185">Reference proteome</keyword>
<keyword id="KW-0687">Ribonucleoprotein</keyword>
<keyword id="KW-0689">Ribosomal protein</keyword>
<keyword id="KW-0694">RNA-binding</keyword>
<keyword id="KW-0699">rRNA-binding</keyword>
<keyword id="KW-0820">tRNA-binding</keyword>
<name>RL16_RUEPO</name>
<evidence type="ECO:0000255" key="1">
    <source>
        <dbReference type="HAMAP-Rule" id="MF_01342"/>
    </source>
</evidence>
<evidence type="ECO:0000305" key="2"/>
<proteinExistence type="inferred from homology"/>
<gene>
    <name evidence="1" type="primary">rplP</name>
    <name type="ordered locus">SPO0488</name>
</gene>
<dbReference type="EMBL" id="CP000031">
    <property type="protein sequence ID" value="AAV93805.1"/>
    <property type="molecule type" value="Genomic_DNA"/>
</dbReference>
<dbReference type="RefSeq" id="WP_011046248.1">
    <property type="nucleotide sequence ID" value="NC_003911.12"/>
</dbReference>
<dbReference type="SMR" id="Q5LW55"/>
<dbReference type="STRING" id="246200.SPO0488"/>
<dbReference type="PaxDb" id="246200-SPO0488"/>
<dbReference type="KEGG" id="sil:SPO0488"/>
<dbReference type="eggNOG" id="COG0197">
    <property type="taxonomic scope" value="Bacteria"/>
</dbReference>
<dbReference type="HOGENOM" id="CLU_078858_2_1_5"/>
<dbReference type="OrthoDB" id="9802589at2"/>
<dbReference type="Proteomes" id="UP000001023">
    <property type="component" value="Chromosome"/>
</dbReference>
<dbReference type="GO" id="GO:0022625">
    <property type="term" value="C:cytosolic large ribosomal subunit"/>
    <property type="evidence" value="ECO:0007669"/>
    <property type="project" value="TreeGrafter"/>
</dbReference>
<dbReference type="GO" id="GO:0019843">
    <property type="term" value="F:rRNA binding"/>
    <property type="evidence" value="ECO:0007669"/>
    <property type="project" value="UniProtKB-UniRule"/>
</dbReference>
<dbReference type="GO" id="GO:0003735">
    <property type="term" value="F:structural constituent of ribosome"/>
    <property type="evidence" value="ECO:0007669"/>
    <property type="project" value="InterPro"/>
</dbReference>
<dbReference type="GO" id="GO:0000049">
    <property type="term" value="F:tRNA binding"/>
    <property type="evidence" value="ECO:0007669"/>
    <property type="project" value="UniProtKB-KW"/>
</dbReference>
<dbReference type="GO" id="GO:0006412">
    <property type="term" value="P:translation"/>
    <property type="evidence" value="ECO:0007669"/>
    <property type="project" value="UniProtKB-UniRule"/>
</dbReference>
<dbReference type="CDD" id="cd01433">
    <property type="entry name" value="Ribosomal_L16_L10e"/>
    <property type="match status" value="1"/>
</dbReference>
<dbReference type="FunFam" id="3.90.1170.10:FF:000001">
    <property type="entry name" value="50S ribosomal protein L16"/>
    <property type="match status" value="1"/>
</dbReference>
<dbReference type="Gene3D" id="3.90.1170.10">
    <property type="entry name" value="Ribosomal protein L10e/L16"/>
    <property type="match status" value="1"/>
</dbReference>
<dbReference type="HAMAP" id="MF_01342">
    <property type="entry name" value="Ribosomal_uL16"/>
    <property type="match status" value="1"/>
</dbReference>
<dbReference type="InterPro" id="IPR047873">
    <property type="entry name" value="Ribosomal_uL16"/>
</dbReference>
<dbReference type="InterPro" id="IPR000114">
    <property type="entry name" value="Ribosomal_uL16_bact-type"/>
</dbReference>
<dbReference type="InterPro" id="IPR020798">
    <property type="entry name" value="Ribosomal_uL16_CS"/>
</dbReference>
<dbReference type="InterPro" id="IPR016180">
    <property type="entry name" value="Ribosomal_uL16_dom"/>
</dbReference>
<dbReference type="InterPro" id="IPR036920">
    <property type="entry name" value="Ribosomal_uL16_sf"/>
</dbReference>
<dbReference type="NCBIfam" id="TIGR01164">
    <property type="entry name" value="rplP_bact"/>
    <property type="match status" value="1"/>
</dbReference>
<dbReference type="PANTHER" id="PTHR12220">
    <property type="entry name" value="50S/60S RIBOSOMAL PROTEIN L16"/>
    <property type="match status" value="1"/>
</dbReference>
<dbReference type="PANTHER" id="PTHR12220:SF13">
    <property type="entry name" value="LARGE RIBOSOMAL SUBUNIT PROTEIN UL16M"/>
    <property type="match status" value="1"/>
</dbReference>
<dbReference type="Pfam" id="PF00252">
    <property type="entry name" value="Ribosomal_L16"/>
    <property type="match status" value="1"/>
</dbReference>
<dbReference type="PRINTS" id="PR00060">
    <property type="entry name" value="RIBOSOMALL16"/>
</dbReference>
<dbReference type="SUPFAM" id="SSF54686">
    <property type="entry name" value="Ribosomal protein L16p/L10e"/>
    <property type="match status" value="1"/>
</dbReference>
<dbReference type="PROSITE" id="PS00586">
    <property type="entry name" value="RIBOSOMAL_L16_1"/>
    <property type="match status" value="1"/>
</dbReference>
<dbReference type="PROSITE" id="PS00701">
    <property type="entry name" value="RIBOSOMAL_L16_2"/>
    <property type="match status" value="1"/>
</dbReference>
<accession>Q5LW55</accession>
<comment type="function">
    <text evidence="1">Binds 23S rRNA and is also seen to make contacts with the A and possibly P site tRNAs.</text>
</comment>
<comment type="subunit">
    <text evidence="1">Part of the 50S ribosomal subunit.</text>
</comment>
<comment type="similarity">
    <text evidence="1">Belongs to the universal ribosomal protein uL16 family.</text>
</comment>
<protein>
    <recommendedName>
        <fullName evidence="1">Large ribosomal subunit protein uL16</fullName>
    </recommendedName>
    <alternativeName>
        <fullName evidence="2">50S ribosomal protein L16</fullName>
    </alternativeName>
</protein>
<sequence>MLQPKRTKFRKMFKGRIHGLAKGGSDLNFGTYGLKALEPERVTARQIEAARRAMTRHMKRQGRVWIRIFPDTPVTSKPTEVRMGKGKGSVDYWACKVKPGRVMFEIDGVNDEIAREALRLAAMKLPIKTRVVVREDW</sequence>
<organism>
    <name type="scientific">Ruegeria pomeroyi (strain ATCC 700808 / DSM 15171 / DSS-3)</name>
    <name type="common">Silicibacter pomeroyi</name>
    <dbReference type="NCBI Taxonomy" id="246200"/>
    <lineage>
        <taxon>Bacteria</taxon>
        <taxon>Pseudomonadati</taxon>
        <taxon>Pseudomonadota</taxon>
        <taxon>Alphaproteobacteria</taxon>
        <taxon>Rhodobacterales</taxon>
        <taxon>Roseobacteraceae</taxon>
        <taxon>Ruegeria</taxon>
    </lineage>
</organism>
<feature type="chain" id="PRO_0000062200" description="Large ribosomal subunit protein uL16">
    <location>
        <begin position="1"/>
        <end position="137"/>
    </location>
</feature>
<reference key="1">
    <citation type="journal article" date="2004" name="Nature">
        <title>Genome sequence of Silicibacter pomeroyi reveals adaptations to the marine environment.</title>
        <authorList>
            <person name="Moran M.A."/>
            <person name="Buchan A."/>
            <person name="Gonzalez J.M."/>
            <person name="Heidelberg J.F."/>
            <person name="Whitman W.B."/>
            <person name="Kiene R.P."/>
            <person name="Henriksen J.R."/>
            <person name="King G.M."/>
            <person name="Belas R."/>
            <person name="Fuqua C."/>
            <person name="Brinkac L.M."/>
            <person name="Lewis M."/>
            <person name="Johri S."/>
            <person name="Weaver B."/>
            <person name="Pai G."/>
            <person name="Eisen J.A."/>
            <person name="Rahe E."/>
            <person name="Sheldon W.M."/>
            <person name="Ye W."/>
            <person name="Miller T.R."/>
            <person name="Carlton J."/>
            <person name="Rasko D.A."/>
            <person name="Paulsen I.T."/>
            <person name="Ren Q."/>
            <person name="Daugherty S.C."/>
            <person name="DeBoy R.T."/>
            <person name="Dodson R.J."/>
            <person name="Durkin A.S."/>
            <person name="Madupu R."/>
            <person name="Nelson W.C."/>
            <person name="Sullivan S.A."/>
            <person name="Rosovitz M.J."/>
            <person name="Haft D.H."/>
            <person name="Selengut J."/>
            <person name="Ward N."/>
        </authorList>
    </citation>
    <scope>NUCLEOTIDE SEQUENCE [LARGE SCALE GENOMIC DNA]</scope>
    <source>
        <strain>ATCC 700808 / DSM 15171 / DSS-3</strain>
    </source>
</reference>
<reference key="2">
    <citation type="journal article" date="2014" name="Stand. Genomic Sci.">
        <title>An updated genome annotation for the model marine bacterium Ruegeria pomeroyi DSS-3.</title>
        <authorList>
            <person name="Rivers A.R."/>
            <person name="Smith C.B."/>
            <person name="Moran M.A."/>
        </authorList>
    </citation>
    <scope>GENOME REANNOTATION</scope>
    <source>
        <strain>ATCC 700808 / DSM 15171 / DSS-3</strain>
    </source>
</reference>